<comment type="function">
    <text>Involved in a nickel transport system, probably translocates nickel through the bacterial inner membrane.</text>
</comment>
<comment type="subunit">
    <text>Probably forms a heterodimeric pore with NikB.</text>
</comment>
<comment type="subcellular location">
    <subcellularLocation>
        <location>Cell inner membrane</location>
        <topology>Multi-pass membrane protein</topology>
    </subcellularLocation>
</comment>
<comment type="similarity">
    <text evidence="3">Belongs to the binding-protein-dependent transport system permease family. OppBC subfamily.</text>
</comment>
<organism>
    <name type="scientific">Escherichia coli (strain K12)</name>
    <dbReference type="NCBI Taxonomy" id="83333"/>
    <lineage>
        <taxon>Bacteria</taxon>
        <taxon>Pseudomonadati</taxon>
        <taxon>Pseudomonadota</taxon>
        <taxon>Gammaproteobacteria</taxon>
        <taxon>Enterobacterales</taxon>
        <taxon>Enterobacteriaceae</taxon>
        <taxon>Escherichia</taxon>
    </lineage>
</organism>
<accession>P0AFA9</accession>
<accession>P33592</accession>
<accession>Q2M7E1</accession>
<dbReference type="EMBL" id="X73143">
    <property type="protein sequence ID" value="CAA51661.1"/>
    <property type="molecule type" value="Genomic_DNA"/>
</dbReference>
<dbReference type="EMBL" id="U00039">
    <property type="protein sequence ID" value="AAB18453.1"/>
    <property type="molecule type" value="Genomic_DNA"/>
</dbReference>
<dbReference type="EMBL" id="U00096">
    <property type="protein sequence ID" value="AAC76503.1"/>
    <property type="molecule type" value="Genomic_DNA"/>
</dbReference>
<dbReference type="EMBL" id="AP009048">
    <property type="protein sequence ID" value="BAE77815.1"/>
    <property type="molecule type" value="Genomic_DNA"/>
</dbReference>
<dbReference type="PIR" id="S39596">
    <property type="entry name" value="S39596"/>
</dbReference>
<dbReference type="RefSeq" id="NP_417935.1">
    <property type="nucleotide sequence ID" value="NC_000913.3"/>
</dbReference>
<dbReference type="RefSeq" id="WP_001008963.1">
    <property type="nucleotide sequence ID" value="NZ_STEB01000004.1"/>
</dbReference>
<dbReference type="SMR" id="P0AFA9"/>
<dbReference type="BioGRID" id="4263255">
    <property type="interactions" value="7"/>
</dbReference>
<dbReference type="ComplexPortal" id="CPX-4348">
    <property type="entry name" value="Nickel ABC transporter complex"/>
</dbReference>
<dbReference type="DIP" id="DIP-48065N"/>
<dbReference type="FunCoup" id="P0AFA9">
    <property type="interactions" value="269"/>
</dbReference>
<dbReference type="STRING" id="511145.b3478"/>
<dbReference type="TCDB" id="3.A.1.5.3">
    <property type="family name" value="the atp-binding cassette (abc) superfamily"/>
</dbReference>
<dbReference type="PaxDb" id="511145-b3478"/>
<dbReference type="EnsemblBacteria" id="AAC76503">
    <property type="protein sequence ID" value="AAC76503"/>
    <property type="gene ID" value="b3478"/>
</dbReference>
<dbReference type="GeneID" id="93778513"/>
<dbReference type="GeneID" id="947990"/>
<dbReference type="KEGG" id="ecj:JW3443"/>
<dbReference type="KEGG" id="eco:b3478"/>
<dbReference type="KEGG" id="ecoc:C3026_18835"/>
<dbReference type="PATRIC" id="fig|1411691.4.peg.3247"/>
<dbReference type="EchoBASE" id="EB2002"/>
<dbReference type="eggNOG" id="COG1173">
    <property type="taxonomic scope" value="Bacteria"/>
</dbReference>
<dbReference type="HOGENOM" id="CLU_028518_1_1_6"/>
<dbReference type="InParanoid" id="P0AFA9"/>
<dbReference type="OMA" id="FVPQYFR"/>
<dbReference type="OrthoDB" id="9805884at2"/>
<dbReference type="PhylomeDB" id="P0AFA9"/>
<dbReference type="BioCyc" id="EcoCyc:NIKC-MONOMER"/>
<dbReference type="BioCyc" id="MetaCyc:NIKC-MONOMER"/>
<dbReference type="PRO" id="PR:P0AFA9"/>
<dbReference type="Proteomes" id="UP000000625">
    <property type="component" value="Chromosome"/>
</dbReference>
<dbReference type="GO" id="GO:0055052">
    <property type="term" value="C:ATP-binding cassette (ABC) transporter complex, substrate-binding subunit-containing"/>
    <property type="evidence" value="ECO:0000303"/>
    <property type="project" value="ComplexPortal"/>
</dbReference>
<dbReference type="GO" id="GO:0016020">
    <property type="term" value="C:membrane"/>
    <property type="evidence" value="ECO:0000303"/>
    <property type="project" value="ComplexPortal"/>
</dbReference>
<dbReference type="GO" id="GO:0005886">
    <property type="term" value="C:plasma membrane"/>
    <property type="evidence" value="ECO:0000314"/>
    <property type="project" value="EcoCyc"/>
</dbReference>
<dbReference type="GO" id="GO:0071916">
    <property type="term" value="F:dipeptide transmembrane transporter activity"/>
    <property type="evidence" value="ECO:0000318"/>
    <property type="project" value="GO_Central"/>
</dbReference>
<dbReference type="GO" id="GO:0016151">
    <property type="term" value="F:nickel cation binding"/>
    <property type="evidence" value="ECO:0000314"/>
    <property type="project" value="EcoCyc"/>
</dbReference>
<dbReference type="GO" id="GO:0015099">
    <property type="term" value="F:nickel cation transmembrane transporter activity"/>
    <property type="evidence" value="ECO:0000315"/>
    <property type="project" value="EcoCyc"/>
</dbReference>
<dbReference type="GO" id="GO:0098716">
    <property type="term" value="P:nickel cation import across plasma membrane"/>
    <property type="evidence" value="ECO:0000315"/>
    <property type="project" value="EcoCyc"/>
</dbReference>
<dbReference type="CDD" id="cd06261">
    <property type="entry name" value="TM_PBP2"/>
    <property type="match status" value="1"/>
</dbReference>
<dbReference type="FunFam" id="1.10.3720.10:FF:000038">
    <property type="entry name" value="Nickel ABC transporter permease subunit NikC"/>
    <property type="match status" value="1"/>
</dbReference>
<dbReference type="Gene3D" id="1.10.3720.10">
    <property type="entry name" value="MetI-like"/>
    <property type="match status" value="1"/>
</dbReference>
<dbReference type="InterPro" id="IPR050366">
    <property type="entry name" value="BP-dependent_transpt_permease"/>
</dbReference>
<dbReference type="InterPro" id="IPR000515">
    <property type="entry name" value="MetI-like"/>
</dbReference>
<dbReference type="InterPro" id="IPR035906">
    <property type="entry name" value="MetI-like_sf"/>
</dbReference>
<dbReference type="InterPro" id="IPR014157">
    <property type="entry name" value="Nickel_NikC"/>
</dbReference>
<dbReference type="NCBIfam" id="TIGR02790">
    <property type="entry name" value="nickel_nikC"/>
    <property type="match status" value="1"/>
</dbReference>
<dbReference type="NCBIfam" id="NF007738">
    <property type="entry name" value="PRK10417.1"/>
    <property type="match status" value="1"/>
</dbReference>
<dbReference type="PANTHER" id="PTHR43386:SF1">
    <property type="entry name" value="D,D-DIPEPTIDE TRANSPORT SYSTEM PERMEASE PROTEIN DDPC-RELATED"/>
    <property type="match status" value="1"/>
</dbReference>
<dbReference type="PANTHER" id="PTHR43386">
    <property type="entry name" value="OLIGOPEPTIDE TRANSPORT SYSTEM PERMEASE PROTEIN APPC"/>
    <property type="match status" value="1"/>
</dbReference>
<dbReference type="Pfam" id="PF00528">
    <property type="entry name" value="BPD_transp_1"/>
    <property type="match status" value="1"/>
</dbReference>
<dbReference type="SUPFAM" id="SSF161098">
    <property type="entry name" value="MetI-like"/>
    <property type="match status" value="1"/>
</dbReference>
<dbReference type="PROSITE" id="PS50928">
    <property type="entry name" value="ABC_TM1"/>
    <property type="match status" value="1"/>
</dbReference>
<proteinExistence type="evidence at protein level"/>
<evidence type="ECO:0000255" key="1"/>
<evidence type="ECO:0000255" key="2">
    <source>
        <dbReference type="PROSITE-ProRule" id="PRU00441"/>
    </source>
</evidence>
<evidence type="ECO:0000305" key="3"/>
<keyword id="KW-0997">Cell inner membrane</keyword>
<keyword id="KW-1003">Cell membrane</keyword>
<keyword id="KW-0406">Ion transport</keyword>
<keyword id="KW-0472">Membrane</keyword>
<keyword id="KW-0533">Nickel</keyword>
<keyword id="KW-0921">Nickel transport</keyword>
<keyword id="KW-1185">Reference proteome</keyword>
<keyword id="KW-0812">Transmembrane</keyword>
<keyword id="KW-1133">Transmembrane helix</keyword>
<keyword id="KW-0813">Transport</keyword>
<reference key="1">
    <citation type="journal article" date="1993" name="Mol. Microbiol.">
        <title>The nik operon of Escherichia coli encodes a periplasmic binding-protein-dependent transport system for nickel.</title>
        <authorList>
            <person name="Navarro C."/>
            <person name="Wu L.-F."/>
            <person name="Mandrand-Berthelot M.-A."/>
        </authorList>
    </citation>
    <scope>NUCLEOTIDE SEQUENCE [GENOMIC DNA]</scope>
    <source>
        <strain>K12</strain>
    </source>
</reference>
<reference key="2">
    <citation type="journal article" date="1994" name="Nucleic Acids Res.">
        <title>Analysis of the Escherichia coli genome. V. DNA sequence of the region from 76.0 to 81.5 minutes.</title>
        <authorList>
            <person name="Sofia H.J."/>
            <person name="Burland V."/>
            <person name="Daniels D.L."/>
            <person name="Plunkett G. III"/>
            <person name="Blattner F.R."/>
        </authorList>
    </citation>
    <scope>NUCLEOTIDE SEQUENCE [LARGE SCALE GENOMIC DNA]</scope>
    <source>
        <strain>K12 / MG1655 / ATCC 47076</strain>
    </source>
</reference>
<reference key="3">
    <citation type="journal article" date="1997" name="Science">
        <title>The complete genome sequence of Escherichia coli K-12.</title>
        <authorList>
            <person name="Blattner F.R."/>
            <person name="Plunkett G. III"/>
            <person name="Bloch C.A."/>
            <person name="Perna N.T."/>
            <person name="Burland V."/>
            <person name="Riley M."/>
            <person name="Collado-Vides J."/>
            <person name="Glasner J.D."/>
            <person name="Rode C.K."/>
            <person name="Mayhew G.F."/>
            <person name="Gregor J."/>
            <person name="Davis N.W."/>
            <person name="Kirkpatrick H.A."/>
            <person name="Goeden M.A."/>
            <person name="Rose D.J."/>
            <person name="Mau B."/>
            <person name="Shao Y."/>
        </authorList>
    </citation>
    <scope>NUCLEOTIDE SEQUENCE [LARGE SCALE GENOMIC DNA]</scope>
    <source>
        <strain>K12 / MG1655 / ATCC 47076</strain>
    </source>
</reference>
<reference key="4">
    <citation type="journal article" date="2006" name="Mol. Syst. Biol.">
        <title>Highly accurate genome sequences of Escherichia coli K-12 strains MG1655 and W3110.</title>
        <authorList>
            <person name="Hayashi K."/>
            <person name="Morooka N."/>
            <person name="Yamamoto Y."/>
            <person name="Fujita K."/>
            <person name="Isono K."/>
            <person name="Choi S."/>
            <person name="Ohtsubo E."/>
            <person name="Baba T."/>
            <person name="Wanner B.L."/>
            <person name="Mori H."/>
            <person name="Horiuchi T."/>
        </authorList>
    </citation>
    <scope>NUCLEOTIDE SEQUENCE [LARGE SCALE GENOMIC DNA]</scope>
    <source>
        <strain>K12 / W3110 / ATCC 27325 / DSM 5911</strain>
    </source>
</reference>
<reference key="5">
    <citation type="journal article" date="2005" name="Science">
        <title>Global topology analysis of the Escherichia coli inner membrane proteome.</title>
        <authorList>
            <person name="Daley D.O."/>
            <person name="Rapp M."/>
            <person name="Granseth E."/>
            <person name="Melen K."/>
            <person name="Drew D."/>
            <person name="von Heijne G."/>
        </authorList>
    </citation>
    <scope>TOPOLOGY [LARGE SCALE ANALYSIS]</scope>
    <source>
        <strain>K12 / MG1655 / ATCC 47076</strain>
    </source>
</reference>
<protein>
    <recommendedName>
        <fullName>Nickel transport system permease protein NikC</fullName>
    </recommendedName>
</protein>
<name>NIKC_ECOLI</name>
<gene>
    <name type="primary">nikC</name>
    <name type="ordered locus">b3478</name>
    <name type="ordered locus">JW3443</name>
</gene>
<sequence length="277" mass="30362">MNFFLSSRWSVRLALIIIALLALIALTSQWWLPYDPQAIDLPSRLLSPDAQHWLGTDHLGRDIFSRLMAATRVSLGSVMACLLLVLTLGLVIGGSAGLIGGRVDQATMRVADMFMTFPTSILSFFMVGVLGTGLTNVIIAIALSHWAWYARMVRSLVISLRQREFVLASRLSGAGHVRVFVDHLAGAVIPSLLVLATLDIGHMMLHVAGMSFLGLGVTAPTAEWGVMINDARQYIWTQPLQMFWPGLALFISVMAFNLVGDALRDHLDPHLVTEHAH</sequence>
<feature type="chain" id="PRO_0000060121" description="Nickel transport system permease protein NikC">
    <location>
        <begin position="1"/>
        <end position="277"/>
    </location>
</feature>
<feature type="topological domain" description="Cytoplasmic" evidence="1">
    <location>
        <begin position="1"/>
        <end position="12"/>
    </location>
</feature>
<feature type="transmembrane region" description="Helical" evidence="2">
    <location>
        <begin position="13"/>
        <end position="33"/>
    </location>
</feature>
<feature type="topological domain" description="Periplasmic" evidence="1">
    <location>
        <begin position="34"/>
        <end position="78"/>
    </location>
</feature>
<feature type="transmembrane region" description="Helical" evidence="2">
    <location>
        <begin position="79"/>
        <end position="99"/>
    </location>
</feature>
<feature type="topological domain" description="Cytoplasmic" evidence="1">
    <location>
        <begin position="100"/>
        <end position="120"/>
    </location>
</feature>
<feature type="transmembrane region" description="Helical" evidence="2">
    <location>
        <begin position="121"/>
        <end position="141"/>
    </location>
</feature>
<feature type="topological domain" description="Periplasmic" evidence="1">
    <location>
        <begin position="142"/>
        <end position="183"/>
    </location>
</feature>
<feature type="transmembrane region" description="Helical" evidence="2">
    <location>
        <begin position="184"/>
        <end position="204"/>
    </location>
</feature>
<feature type="topological domain" description="Cytoplasmic" evidence="1">
    <location>
        <begin position="205"/>
        <end position="207"/>
    </location>
</feature>
<feature type="transmembrane region" description="Helical" evidence="2">
    <location>
        <begin position="208"/>
        <end position="228"/>
    </location>
</feature>
<feature type="topological domain" description="Periplasmic" evidence="1">
    <location>
        <begin position="229"/>
        <end position="239"/>
    </location>
</feature>
<feature type="transmembrane region" description="Helical" evidence="2">
    <location>
        <begin position="240"/>
        <end position="260"/>
    </location>
</feature>
<feature type="topological domain" description="Cytoplasmic" evidence="1">
    <location>
        <begin position="261"/>
        <end position="277"/>
    </location>
</feature>
<feature type="domain" description="ABC transmembrane type-1" evidence="2">
    <location>
        <begin position="67"/>
        <end position="260"/>
    </location>
</feature>